<gene>
    <name type="primary">MT-CYB</name>
    <name type="synonym">COB</name>
    <name type="synonym">CYTB</name>
    <name type="synonym">MTCYB</name>
</gene>
<feature type="chain" id="PRO_0000061409" description="Cytochrome b">
    <location>
        <begin position="1"/>
        <end position="376"/>
    </location>
</feature>
<feature type="transmembrane region" description="Helical" evidence="3">
    <location>
        <begin position="28"/>
        <end position="48"/>
    </location>
</feature>
<feature type="transmembrane region" description="Helical" evidence="3">
    <location>
        <begin position="72"/>
        <end position="94"/>
    </location>
</feature>
<feature type="transmembrane region" description="Helical" evidence="3">
    <location>
        <begin position="107"/>
        <end position="127"/>
    </location>
</feature>
<feature type="transmembrane region" description="Helical" evidence="3">
    <location>
        <begin position="169"/>
        <end position="189"/>
    </location>
</feature>
<feature type="transmembrane region" description="Helical" evidence="3">
    <location>
        <begin position="214"/>
        <end position="234"/>
    </location>
</feature>
<feature type="transmembrane region" description="Helical" evidence="4">
    <location>
        <begin position="274"/>
        <end position="294"/>
    </location>
</feature>
<feature type="transmembrane region" description="Helical" evidence="4">
    <location>
        <begin position="317"/>
        <end position="337"/>
    </location>
</feature>
<feature type="transmembrane region" description="Helical" evidence="4">
    <location>
        <begin position="340"/>
        <end position="360"/>
    </location>
</feature>
<feature type="binding site" description="axial binding residue" evidence="3">
    <location>
        <position position="78"/>
    </location>
    <ligand>
        <name>heme b</name>
        <dbReference type="ChEBI" id="CHEBI:60344"/>
        <label>b562</label>
    </ligand>
    <ligandPart>
        <name>Fe</name>
        <dbReference type="ChEBI" id="CHEBI:18248"/>
    </ligandPart>
</feature>
<feature type="binding site" description="axial binding residue" evidence="3">
    <location>
        <position position="92"/>
    </location>
    <ligand>
        <name>heme b</name>
        <dbReference type="ChEBI" id="CHEBI:60344"/>
        <label>b566</label>
    </ligand>
    <ligandPart>
        <name>Fe</name>
        <dbReference type="ChEBI" id="CHEBI:18248"/>
    </ligandPart>
</feature>
<feature type="binding site" description="axial binding residue" evidence="3">
    <location>
        <position position="173"/>
    </location>
    <ligand>
        <name>heme b</name>
        <dbReference type="ChEBI" id="CHEBI:60344"/>
        <label>b562</label>
    </ligand>
    <ligandPart>
        <name>Fe</name>
        <dbReference type="ChEBI" id="CHEBI:18248"/>
    </ligandPart>
</feature>
<feature type="binding site" description="axial binding residue" evidence="3">
    <location>
        <position position="187"/>
    </location>
    <ligand>
        <name>heme b</name>
        <dbReference type="ChEBI" id="CHEBI:60344"/>
        <label>b566</label>
    </ligand>
    <ligandPart>
        <name>Fe</name>
        <dbReference type="ChEBI" id="CHEBI:18248"/>
    </ligandPart>
</feature>
<feature type="binding site" evidence="2">
    <location>
        <position position="192"/>
    </location>
    <ligand>
        <name>a ubiquinone</name>
        <dbReference type="ChEBI" id="CHEBI:16389"/>
    </ligand>
</feature>
<proteinExistence type="inferred from homology"/>
<reference key="1">
    <citation type="journal article" date="1988" name="Mol. Biochem. Parasitol.">
        <title>Molecular cloning and partial sequence of a 5.8 kilobase pair repetitive DNA from Plasmodium falciparum.</title>
        <authorList>
            <person name="Suplick K."/>
            <person name="Akella R."/>
            <person name="Saul A.J."/>
            <person name="Vaidya A."/>
        </authorList>
    </citation>
    <scope>NUCLEOTIDE SEQUENCE [GENOMIC DNA]</scope>
</reference>
<reference key="2">
    <citation type="journal article" date="1993" name="Mol. Biochem. Parasitol.">
        <title>Structural features of Plasmodium cytochrome b that may underlie susceptibility to 8-aminoquinolines and hydroxynaphthoquinones.</title>
        <authorList>
            <person name="Vaidya A.B."/>
            <person name="Lashgari M.S."/>
            <person name="Pologe L.G."/>
            <person name="Morrisey J."/>
        </authorList>
    </citation>
    <scope>NUCLEOTIDE SEQUENCE [GENOMIC DNA]</scope>
    <source>
        <strain>Isolate Camp / Malaysia</strain>
    </source>
</reference>
<reference key="3">
    <citation type="journal article" date="1992" name="Nucleic Acids Res.">
        <title>Homologies between the contiguous and fragmented rRNAs of the two Plasmodium falciparum extrachromosomal DNAs are limited to core sequences.</title>
        <authorList>
            <person name="Feagin J.E."/>
            <person name="Werner E."/>
            <person name="Gardner M.J."/>
            <person name="Williamson D.H."/>
            <person name="Wilson R.J."/>
        </authorList>
    </citation>
    <scope>NUCLEOTIDE SEQUENCE [GENOMIC DNA] OF 26-376</scope>
</reference>
<sequence>MNFYSINLVKAHLINYPCPLNINFLWNYGFLLGIIFFIQIITGVFLASRYTPDVSYAYYSIQHILRELWSGWCFRYMHATGASLVFLLTYLHILRGLNYSYMYLPLSWISGLILFMIFIVTAFVGYVLPWGQMSYWGATVITNLLSSIPVAVIWICGGYTVSDPTIKRFFVLHFILPFIGLCIVFIHIFFLHLHGSTNPLGYDTALKIPFYPNLLSLDVKGFNNVIILFLIQSLFGIIPLSHPDNAIVVNTYVTPSQIVPEWYFLPFYAMLKTVPSKPAGLVIVLLSLQLLFLLAEQRSLTTIIQFKMIFGARDYSVPIIWFMCAFYALLWIGCQLPQDIFILYGRLFIVLFFCSGLFVLVHYRRTHYDYSSQANI</sequence>
<organism>
    <name type="scientific">Plasmodium falciparum</name>
    <dbReference type="NCBI Taxonomy" id="5833"/>
    <lineage>
        <taxon>Eukaryota</taxon>
        <taxon>Sar</taxon>
        <taxon>Alveolata</taxon>
        <taxon>Apicomplexa</taxon>
        <taxon>Aconoidasida</taxon>
        <taxon>Haemosporida</taxon>
        <taxon>Plasmodiidae</taxon>
        <taxon>Plasmodium</taxon>
        <taxon>Plasmodium (Laverania)</taxon>
    </lineage>
</organism>
<geneLocation type="mitochondrion"/>
<accession>Q02768</accession>
<keyword id="KW-0249">Electron transport</keyword>
<keyword id="KW-0349">Heme</keyword>
<keyword id="KW-0408">Iron</keyword>
<keyword id="KW-0472">Membrane</keyword>
<keyword id="KW-0479">Metal-binding</keyword>
<keyword id="KW-0496">Mitochondrion</keyword>
<keyword id="KW-0999">Mitochondrion inner membrane</keyword>
<keyword id="KW-0679">Respiratory chain</keyword>
<keyword id="KW-0812">Transmembrane</keyword>
<keyword id="KW-1133">Transmembrane helix</keyword>
<keyword id="KW-0813">Transport</keyword>
<keyword id="KW-0830">Ubiquinone</keyword>
<name>CYB_PLAFA</name>
<evidence type="ECO:0000250" key="1"/>
<evidence type="ECO:0000250" key="2">
    <source>
        <dbReference type="UniProtKB" id="P00157"/>
    </source>
</evidence>
<evidence type="ECO:0000250" key="3">
    <source>
        <dbReference type="UniProtKB" id="P00163"/>
    </source>
</evidence>
<evidence type="ECO:0000255" key="4"/>
<evidence type="ECO:0000255" key="5">
    <source>
        <dbReference type="PROSITE-ProRule" id="PRU00967"/>
    </source>
</evidence>
<evidence type="ECO:0000255" key="6">
    <source>
        <dbReference type="PROSITE-ProRule" id="PRU00968"/>
    </source>
</evidence>
<protein>
    <recommendedName>
        <fullName>Cytochrome b</fullName>
    </recommendedName>
    <alternativeName>
        <fullName>Complex III subunit 3</fullName>
    </alternativeName>
    <alternativeName>
        <fullName>Complex III subunit III</fullName>
    </alternativeName>
    <alternativeName>
        <fullName>Cytochrome b-c1 complex subunit 3</fullName>
    </alternativeName>
    <alternativeName>
        <fullName>Ubiquinol-cytochrome-c reductase complex cytochrome b subunit</fullName>
    </alternativeName>
</protein>
<comment type="function">
    <text evidence="3">Component of the ubiquinol-cytochrome c reductase complex (complex III or cytochrome b-c1 complex) that is part of the mitochondrial respiratory chain. The b-c1 complex mediates electron transfer from ubiquinol to cytochrome c. Contributes to the generation of a proton gradient across the mitochondrial membrane that is then used for ATP synthesis.</text>
</comment>
<comment type="cofactor">
    <cofactor evidence="3">
        <name>heme b</name>
        <dbReference type="ChEBI" id="CHEBI:60344"/>
    </cofactor>
    <text evidence="3">Binds 2 heme b groups non-covalently.</text>
</comment>
<comment type="subunit">
    <text evidence="1">The main subunits of complex b-c1 are: cytochrome b, cytochrome c1 and the Rieske protein.</text>
</comment>
<comment type="subcellular location">
    <subcellularLocation>
        <location evidence="3">Mitochondrion inner membrane</location>
        <topology evidence="3">Multi-pass membrane protein</topology>
    </subcellularLocation>
</comment>
<comment type="miscellaneous">
    <text evidence="1">Heme 1 (or BL or b562) is low-potential and absorbs at about 562 nm, and heme 2 (or BH or b566) is high-potential and absorbs at about 566 nm.</text>
</comment>
<comment type="similarity">
    <text evidence="5 6">Belongs to the cytochrome b family.</text>
</comment>
<comment type="caution">
    <text evidence="3">The protein contains an even number of transmembrane helices, fewer than predicted by bioinformatics tools.</text>
</comment>
<dbReference type="EMBL" id="M99416">
    <property type="protein sequence ID" value="AAC06270.1"/>
    <property type="molecule type" value="Genomic_DNA"/>
</dbReference>
<dbReference type="EMBL" id="M76611">
    <property type="protein sequence ID" value="AAC63391.1"/>
    <property type="molecule type" value="Genomic_DNA"/>
</dbReference>
<dbReference type="PIR" id="S28664">
    <property type="entry name" value="S28664"/>
</dbReference>
<dbReference type="RefSeq" id="NP_059668.1">
    <property type="nucleotide sequence ID" value="NC_002375.1"/>
</dbReference>
<dbReference type="SMR" id="Q02768"/>
<dbReference type="ChEMBL" id="CHEMBL1777"/>
<dbReference type="DrugBank" id="DB01117">
    <property type="generic name" value="Atovaquone"/>
</dbReference>
<dbReference type="DrugCentral" id="Q02768"/>
<dbReference type="GuidetoPHARMACOLOGY" id="3087"/>
<dbReference type="TCDB" id="3.D.3.2.2">
    <property type="family name" value="the proton-translocating quinol:cytochrome c reductase (qcr) superfamily"/>
</dbReference>
<dbReference type="KEGG" id="pfa:PlfaoMp3"/>
<dbReference type="VEuPathDB" id="PlasmoDB:PF3D7_MIT02300"/>
<dbReference type="VEuPathDB" id="PlasmoDB:Pf7G8-2_000005300"/>
<dbReference type="VEuPathDB" id="PlasmoDB:Pf7G8_000015850"/>
<dbReference type="VEuPathDB" id="PlasmoDB:PfDd2_000011300"/>
<dbReference type="VEuPathDB" id="PlasmoDB:PfGA01_000021300"/>
<dbReference type="VEuPathDB" id="PlasmoDB:PfGB4_000031700"/>
<dbReference type="VEuPathDB" id="PlasmoDB:PfGN01_000029800"/>
<dbReference type="VEuPathDB" id="PlasmoDB:PfHB3_000018900"/>
<dbReference type="VEuPathDB" id="PlasmoDB:PfIT_000023800"/>
<dbReference type="VEuPathDB" id="PlasmoDB:PfKE01_000017400"/>
<dbReference type="VEuPathDB" id="PlasmoDB:PfKH01_000057100"/>
<dbReference type="VEuPathDB" id="PlasmoDB:PfKH02_000021100"/>
<dbReference type="VEuPathDB" id="PlasmoDB:PfML01_000121600"/>
<dbReference type="VEuPathDB" id="PlasmoDB:PfNF135_000041300"/>
<dbReference type="VEuPathDB" id="PlasmoDB:PfNF166_000018800"/>
<dbReference type="VEuPathDB" id="PlasmoDB:PfNF54_000013000"/>
<dbReference type="VEuPathDB" id="PlasmoDB:PfSD01_000015500"/>
<dbReference type="VEuPathDB" id="PlasmoDB:PfTG01_000076600"/>
<dbReference type="PRO" id="PR:Q02768"/>
<dbReference type="GO" id="GO:0005743">
    <property type="term" value="C:mitochondrial inner membrane"/>
    <property type="evidence" value="ECO:0007669"/>
    <property type="project" value="UniProtKB-SubCell"/>
</dbReference>
<dbReference type="GO" id="GO:0046872">
    <property type="term" value="F:metal ion binding"/>
    <property type="evidence" value="ECO:0007669"/>
    <property type="project" value="UniProtKB-KW"/>
</dbReference>
<dbReference type="GO" id="GO:0008121">
    <property type="term" value="F:ubiquinol-cytochrome-c reductase activity"/>
    <property type="evidence" value="ECO:0007669"/>
    <property type="project" value="TreeGrafter"/>
</dbReference>
<dbReference type="GO" id="GO:0006122">
    <property type="term" value="P:mitochondrial electron transport, ubiquinol to cytochrome c"/>
    <property type="evidence" value="ECO:0007669"/>
    <property type="project" value="TreeGrafter"/>
</dbReference>
<dbReference type="CDD" id="cd00284">
    <property type="entry name" value="Cytochrome_b_N"/>
    <property type="match status" value="1"/>
</dbReference>
<dbReference type="FunFam" id="1.20.810.10:FF:000008">
    <property type="entry name" value="Cytochrome b"/>
    <property type="match status" value="1"/>
</dbReference>
<dbReference type="Gene3D" id="1.20.810.10">
    <property type="entry name" value="Cytochrome Bc1 Complex, Chain C"/>
    <property type="match status" value="1"/>
</dbReference>
<dbReference type="InterPro" id="IPR005798">
    <property type="entry name" value="Cyt_b/b6_C"/>
</dbReference>
<dbReference type="InterPro" id="IPR036150">
    <property type="entry name" value="Cyt_b/b6_C_sf"/>
</dbReference>
<dbReference type="InterPro" id="IPR005797">
    <property type="entry name" value="Cyt_b/b6_N"/>
</dbReference>
<dbReference type="InterPro" id="IPR027387">
    <property type="entry name" value="Cytb/b6-like_sf"/>
</dbReference>
<dbReference type="InterPro" id="IPR048259">
    <property type="entry name" value="Cytochrome_b_N_euk/bac"/>
</dbReference>
<dbReference type="InterPro" id="IPR016174">
    <property type="entry name" value="Di-haem_cyt_TM"/>
</dbReference>
<dbReference type="PANTHER" id="PTHR19271">
    <property type="entry name" value="CYTOCHROME B"/>
    <property type="match status" value="1"/>
</dbReference>
<dbReference type="PANTHER" id="PTHR19271:SF16">
    <property type="entry name" value="CYTOCHROME B"/>
    <property type="match status" value="1"/>
</dbReference>
<dbReference type="Pfam" id="PF00032">
    <property type="entry name" value="Cytochrom_B_C"/>
    <property type="match status" value="1"/>
</dbReference>
<dbReference type="Pfam" id="PF00033">
    <property type="entry name" value="Cytochrome_B"/>
    <property type="match status" value="1"/>
</dbReference>
<dbReference type="SUPFAM" id="SSF81648">
    <property type="entry name" value="a domain/subunit of cytochrome bc1 complex (Ubiquinol-cytochrome c reductase)"/>
    <property type="match status" value="1"/>
</dbReference>
<dbReference type="SUPFAM" id="SSF81342">
    <property type="entry name" value="Transmembrane di-heme cytochromes"/>
    <property type="match status" value="1"/>
</dbReference>
<dbReference type="PROSITE" id="PS51003">
    <property type="entry name" value="CYTB_CTER"/>
    <property type="match status" value="1"/>
</dbReference>
<dbReference type="PROSITE" id="PS51002">
    <property type="entry name" value="CYTB_NTER"/>
    <property type="match status" value="1"/>
</dbReference>